<protein>
    <recommendedName>
        <fullName evidence="1">Ribosomal RNA small subunit methyltransferase F</fullName>
        <ecNumber evidence="1">2.1.1.178</ecNumber>
    </recommendedName>
    <alternativeName>
        <fullName evidence="1">16S rRNA m5C1407 methyltransferase</fullName>
    </alternativeName>
    <alternativeName>
        <fullName evidence="1">rRNA (cytosine-C(5)-)-methyltransferase RsmF</fullName>
    </alternativeName>
</protein>
<dbReference type="EC" id="2.1.1.178" evidence="1"/>
<dbReference type="EMBL" id="CU468135">
    <property type="protein sequence ID" value="CAO96557.1"/>
    <property type="molecule type" value="Genomic_DNA"/>
</dbReference>
<dbReference type="RefSeq" id="WP_012441251.1">
    <property type="nucleotide sequence ID" value="NC_010694.1"/>
</dbReference>
<dbReference type="SMR" id="B2VJ83"/>
<dbReference type="STRING" id="465817.ETA_15110"/>
<dbReference type="KEGG" id="eta:ETA_15110"/>
<dbReference type="eggNOG" id="COG0144">
    <property type="taxonomic scope" value="Bacteria"/>
</dbReference>
<dbReference type="eggNOG" id="COG3270">
    <property type="taxonomic scope" value="Bacteria"/>
</dbReference>
<dbReference type="HOGENOM" id="CLU_005316_6_2_6"/>
<dbReference type="OrthoDB" id="9810297at2"/>
<dbReference type="Proteomes" id="UP000001726">
    <property type="component" value="Chromosome"/>
</dbReference>
<dbReference type="GO" id="GO:0005737">
    <property type="term" value="C:cytoplasm"/>
    <property type="evidence" value="ECO:0007669"/>
    <property type="project" value="UniProtKB-SubCell"/>
</dbReference>
<dbReference type="GO" id="GO:0003723">
    <property type="term" value="F:RNA binding"/>
    <property type="evidence" value="ECO:0007669"/>
    <property type="project" value="UniProtKB-KW"/>
</dbReference>
<dbReference type="GO" id="GO:0009383">
    <property type="term" value="F:rRNA (cytosine-C5-)-methyltransferase activity"/>
    <property type="evidence" value="ECO:0007669"/>
    <property type="project" value="TreeGrafter"/>
</dbReference>
<dbReference type="GO" id="GO:0070475">
    <property type="term" value="P:rRNA base methylation"/>
    <property type="evidence" value="ECO:0007669"/>
    <property type="project" value="TreeGrafter"/>
</dbReference>
<dbReference type="Gene3D" id="3.10.450.720">
    <property type="match status" value="1"/>
</dbReference>
<dbReference type="Gene3D" id="3.40.50.150">
    <property type="entry name" value="Vaccinia Virus protein VP39"/>
    <property type="match status" value="1"/>
</dbReference>
<dbReference type="HAMAP" id="MF_01579">
    <property type="entry name" value="16SrRNA_methyltr_F"/>
    <property type="match status" value="1"/>
</dbReference>
<dbReference type="InterPro" id="IPR031341">
    <property type="entry name" value="Methyltr_RsmF_N"/>
</dbReference>
<dbReference type="InterPro" id="IPR049560">
    <property type="entry name" value="MeTrfase_RsmB-F_NOP2_cat"/>
</dbReference>
<dbReference type="InterPro" id="IPR001678">
    <property type="entry name" value="MeTrfase_RsmB-F_NOP2_dom"/>
</dbReference>
<dbReference type="InterPro" id="IPR027391">
    <property type="entry name" value="Nol1_Nop2_Fmu_2"/>
</dbReference>
<dbReference type="InterPro" id="IPR011023">
    <property type="entry name" value="Nop2p"/>
</dbReference>
<dbReference type="InterPro" id="IPR023267">
    <property type="entry name" value="RCMT"/>
</dbReference>
<dbReference type="InterPro" id="IPR023545">
    <property type="entry name" value="rRNA_ssu_MeTfrase_F"/>
</dbReference>
<dbReference type="InterPro" id="IPR018314">
    <property type="entry name" value="RsmB/NOL1/NOP2-like_CS"/>
</dbReference>
<dbReference type="InterPro" id="IPR029063">
    <property type="entry name" value="SAM-dependent_MTases_sf"/>
</dbReference>
<dbReference type="InterPro" id="IPR048457">
    <property type="entry name" value="YebU_pre-PUA_dom"/>
</dbReference>
<dbReference type="NCBIfam" id="TIGR00446">
    <property type="entry name" value="nop2p"/>
    <property type="match status" value="1"/>
</dbReference>
<dbReference type="NCBIfam" id="NF008898">
    <property type="entry name" value="PRK11933.1"/>
    <property type="match status" value="1"/>
</dbReference>
<dbReference type="PANTHER" id="PTHR22807:SF30">
    <property type="entry name" value="28S RRNA (CYTOSINE(4447)-C(5))-METHYLTRANSFERASE-RELATED"/>
    <property type="match status" value="1"/>
</dbReference>
<dbReference type="PANTHER" id="PTHR22807">
    <property type="entry name" value="NOP2 YEAST -RELATED NOL1/NOP2/FMU SUN DOMAIN-CONTAINING"/>
    <property type="match status" value="1"/>
</dbReference>
<dbReference type="Pfam" id="PF01189">
    <property type="entry name" value="Methyltr_RsmB-F"/>
    <property type="match status" value="1"/>
</dbReference>
<dbReference type="Pfam" id="PF17125">
    <property type="entry name" value="Methyltr_RsmF_N"/>
    <property type="match status" value="1"/>
</dbReference>
<dbReference type="Pfam" id="PF13636">
    <property type="entry name" value="Methyltranf_PUA"/>
    <property type="match status" value="1"/>
</dbReference>
<dbReference type="Pfam" id="PF21150">
    <property type="entry name" value="YebU_pre-PUA_dom"/>
    <property type="match status" value="1"/>
</dbReference>
<dbReference type="PRINTS" id="PR02008">
    <property type="entry name" value="RCMTFAMILY"/>
</dbReference>
<dbReference type="SUPFAM" id="SSF53335">
    <property type="entry name" value="S-adenosyl-L-methionine-dependent methyltransferases"/>
    <property type="match status" value="1"/>
</dbReference>
<dbReference type="PROSITE" id="PS01153">
    <property type="entry name" value="NOL1_NOP2_SUN"/>
    <property type="match status" value="1"/>
</dbReference>
<dbReference type="PROSITE" id="PS51686">
    <property type="entry name" value="SAM_MT_RSMB_NOP"/>
    <property type="match status" value="1"/>
</dbReference>
<organism>
    <name type="scientific">Erwinia tasmaniensis (strain DSM 17950 / CFBP 7177 / CIP 109463 / NCPPB 4357 / Et1/99)</name>
    <dbReference type="NCBI Taxonomy" id="465817"/>
    <lineage>
        <taxon>Bacteria</taxon>
        <taxon>Pseudomonadati</taxon>
        <taxon>Pseudomonadota</taxon>
        <taxon>Gammaproteobacteria</taxon>
        <taxon>Enterobacterales</taxon>
        <taxon>Erwiniaceae</taxon>
        <taxon>Erwinia</taxon>
    </lineage>
</organism>
<gene>
    <name evidence="1" type="primary">rsmF</name>
    <name type="ordered locus">ETA_15110</name>
</gene>
<accession>B2VJ83</accession>
<reference key="1">
    <citation type="journal article" date="2008" name="Environ. Microbiol.">
        <title>The genome of Erwinia tasmaniensis strain Et1/99, a non-pathogenic bacterium in the genus Erwinia.</title>
        <authorList>
            <person name="Kube M."/>
            <person name="Migdoll A.M."/>
            <person name="Mueller I."/>
            <person name="Kuhl H."/>
            <person name="Beck A."/>
            <person name="Reinhardt R."/>
            <person name="Geider K."/>
        </authorList>
    </citation>
    <scope>NUCLEOTIDE SEQUENCE [LARGE SCALE GENOMIC DNA]</scope>
    <source>
        <strain>DSM 17950 / CFBP 7177 / CIP 109463 / NCPPB 4357 / Et1/99</strain>
    </source>
</reference>
<evidence type="ECO:0000255" key="1">
    <source>
        <dbReference type="HAMAP-Rule" id="MF_01579"/>
    </source>
</evidence>
<comment type="function">
    <text evidence="1">Specifically methylates the cytosine at position 1407 (m5C1407) of 16S rRNA.</text>
</comment>
<comment type="catalytic activity">
    <reaction evidence="1">
        <text>cytidine(1407) in 16S rRNA + S-adenosyl-L-methionine = 5-methylcytidine(1407) in 16S rRNA + S-adenosyl-L-homocysteine + H(+)</text>
        <dbReference type="Rhea" id="RHEA:42756"/>
        <dbReference type="Rhea" id="RHEA-COMP:10223"/>
        <dbReference type="Rhea" id="RHEA-COMP:10224"/>
        <dbReference type="ChEBI" id="CHEBI:15378"/>
        <dbReference type="ChEBI" id="CHEBI:57856"/>
        <dbReference type="ChEBI" id="CHEBI:59789"/>
        <dbReference type="ChEBI" id="CHEBI:74483"/>
        <dbReference type="ChEBI" id="CHEBI:82748"/>
        <dbReference type="EC" id="2.1.1.178"/>
    </reaction>
</comment>
<comment type="subcellular location">
    <subcellularLocation>
        <location evidence="1">Cytoplasm</location>
    </subcellularLocation>
</comment>
<comment type="similarity">
    <text evidence="1">Belongs to the class I-like SAM-binding methyltransferase superfamily. RsmB/NOP family.</text>
</comment>
<keyword id="KW-0963">Cytoplasm</keyword>
<keyword id="KW-0489">Methyltransferase</keyword>
<keyword id="KW-1185">Reference proteome</keyword>
<keyword id="KW-0694">RNA-binding</keyword>
<keyword id="KW-0698">rRNA processing</keyword>
<keyword id="KW-0949">S-adenosyl-L-methionine</keyword>
<keyword id="KW-0808">Transferase</keyword>
<feature type="chain" id="PRO_1000185643" description="Ribosomal RNA small subunit methyltransferase F">
    <location>
        <begin position="1"/>
        <end position="478"/>
    </location>
</feature>
<feature type="active site" description="Nucleophile" evidence="1">
    <location>
        <position position="248"/>
    </location>
</feature>
<feature type="binding site" evidence="1">
    <location>
        <begin position="126"/>
        <end position="132"/>
    </location>
    <ligand>
        <name>S-adenosyl-L-methionine</name>
        <dbReference type="ChEBI" id="CHEBI:59789"/>
    </ligand>
</feature>
<feature type="binding site" evidence="1">
    <location>
        <position position="150"/>
    </location>
    <ligand>
        <name>S-adenosyl-L-methionine</name>
        <dbReference type="ChEBI" id="CHEBI:59789"/>
    </ligand>
</feature>
<feature type="binding site" evidence="1">
    <location>
        <position position="177"/>
    </location>
    <ligand>
        <name>S-adenosyl-L-methionine</name>
        <dbReference type="ChEBI" id="CHEBI:59789"/>
    </ligand>
</feature>
<feature type="binding site" evidence="1">
    <location>
        <position position="195"/>
    </location>
    <ligand>
        <name>S-adenosyl-L-methionine</name>
        <dbReference type="ChEBI" id="CHEBI:59789"/>
    </ligand>
</feature>
<proteinExistence type="inferred from homology"/>
<sequence length="478" mass="53266">MSHTSRVFFPPAFVEQMQQLLPDADEFQRFITSSQLPLRRSLRVNTLKISVDDFLTLVEPYQWALTPIPWCQEGFWISRDDADTLPLGSTAEHLAGLFYIQEASSMLPVSALFDGGDMPQRVMDMAAAPGSKTTQIAAHMGNRGAILANEYSASRVKVLHANLSRCGVSNTAMTHFDGRVFGPALPECFDAVLLDAPCSGEGVVRKDADALRNWSQSSTEEIAATQQALINSAFHALRPGGTLVYSTCTLNTRENQQVVNGLLEQYPDAVKVEPLDTLFMGAERATTAEGYLHVFPHIFDSEGFFVARLRKVASVPPMPQPGYKVGKPPFTPLNRVQQQEVIAAAASVGLRWDTELKLWQRDKELWLFPSEIEPLLGRVRFSRIGLKLAETFPKGFRWQHHAAVALADAASANAFELNSNEAEEWYRGRDIYPERDLPASELIICYQQRPIGIAKKVGSRIKNNYPRELVRDGKLFTL</sequence>
<name>RSMF_ERWT9</name>